<keyword id="KW-1003">Cell membrane</keyword>
<keyword id="KW-0961">Cell wall biogenesis/degradation</keyword>
<keyword id="KW-0325">Glycoprotein</keyword>
<keyword id="KW-0472">Membrane</keyword>
<keyword id="KW-1185">Reference proteome</keyword>
<keyword id="KW-0812">Transmembrane</keyword>
<keyword id="KW-1133">Transmembrane helix</keyword>
<gene>
    <name type="ORF">POPTRDRAFT_569472</name>
</gene>
<proteinExistence type="inferred from homology"/>
<comment type="function">
    <text evidence="1">Regulates membrane-cell wall junctions and localized cell wall deposition. Required for establishment of the Casparian strip membrane domain (CSD) and the subsequent formation of Casparian strips, a cell wall modification of the root endodermis that determines an apoplastic barrier between the intraorganismal apoplasm and the extraorganismal apoplasm and prevents lateral diffusion (By similarity).</text>
</comment>
<comment type="subunit">
    <text evidence="1">Homodimer and heterodimers.</text>
</comment>
<comment type="subcellular location">
    <subcellularLocation>
        <location evidence="1">Cell membrane</location>
        <topology evidence="1">Multi-pass membrane protein</topology>
    </subcellularLocation>
    <text evidence="1">Very restricted localization following a belt shape within the plasma membrane which coincides with the position of the Casparian strip membrane domain in the root endodermis.</text>
</comment>
<comment type="similarity">
    <text evidence="3">Belongs to the Casparian strip membrane proteins (CASP) family.</text>
</comment>
<reference key="1">
    <citation type="journal article" date="2006" name="Science">
        <title>The genome of black cottonwood, Populus trichocarpa (Torr. &amp; Gray).</title>
        <authorList>
            <person name="Tuskan G.A."/>
            <person name="Difazio S."/>
            <person name="Jansson S."/>
            <person name="Bohlmann J."/>
            <person name="Grigoriev I."/>
            <person name="Hellsten U."/>
            <person name="Putnam N."/>
            <person name="Ralph S."/>
            <person name="Rombauts S."/>
            <person name="Salamov A."/>
            <person name="Schein J."/>
            <person name="Sterck L."/>
            <person name="Aerts A."/>
            <person name="Bhalerao R.R."/>
            <person name="Bhalerao R.P."/>
            <person name="Blaudez D."/>
            <person name="Boerjan W."/>
            <person name="Brun A."/>
            <person name="Brunner A."/>
            <person name="Busov V."/>
            <person name="Campbell M."/>
            <person name="Carlson J."/>
            <person name="Chalot M."/>
            <person name="Chapman J."/>
            <person name="Chen G.-L."/>
            <person name="Cooper D."/>
            <person name="Coutinho P.M."/>
            <person name="Couturier J."/>
            <person name="Covert S."/>
            <person name="Cronk Q."/>
            <person name="Cunningham R."/>
            <person name="Davis J."/>
            <person name="Degroeve S."/>
            <person name="Dejardin A."/>
            <person name="dePamphilis C.W."/>
            <person name="Detter J."/>
            <person name="Dirks B."/>
            <person name="Dubchak I."/>
            <person name="Duplessis S."/>
            <person name="Ehlting J."/>
            <person name="Ellis B."/>
            <person name="Gendler K."/>
            <person name="Goodstein D."/>
            <person name="Gribskov M."/>
            <person name="Grimwood J."/>
            <person name="Groover A."/>
            <person name="Gunter L."/>
            <person name="Hamberger B."/>
            <person name="Heinze B."/>
            <person name="Helariutta Y."/>
            <person name="Henrissat B."/>
            <person name="Holligan D."/>
            <person name="Holt R."/>
            <person name="Huang W."/>
            <person name="Islam-Faridi N."/>
            <person name="Jones S."/>
            <person name="Jones-Rhoades M."/>
            <person name="Jorgensen R."/>
            <person name="Joshi C."/>
            <person name="Kangasjaervi J."/>
            <person name="Karlsson J."/>
            <person name="Kelleher C."/>
            <person name="Kirkpatrick R."/>
            <person name="Kirst M."/>
            <person name="Kohler A."/>
            <person name="Kalluri U."/>
            <person name="Larimer F."/>
            <person name="Leebens-Mack J."/>
            <person name="Leple J.-C."/>
            <person name="Locascio P."/>
            <person name="Lou Y."/>
            <person name="Lucas S."/>
            <person name="Martin F."/>
            <person name="Montanini B."/>
            <person name="Napoli C."/>
            <person name="Nelson D.R."/>
            <person name="Nelson C."/>
            <person name="Nieminen K."/>
            <person name="Nilsson O."/>
            <person name="Pereda V."/>
            <person name="Peter G."/>
            <person name="Philippe R."/>
            <person name="Pilate G."/>
            <person name="Poliakov A."/>
            <person name="Razumovskaya J."/>
            <person name="Richardson P."/>
            <person name="Rinaldi C."/>
            <person name="Ritland K."/>
            <person name="Rouze P."/>
            <person name="Ryaboy D."/>
            <person name="Schmutz J."/>
            <person name="Schrader J."/>
            <person name="Segerman B."/>
            <person name="Shin H."/>
            <person name="Siddiqui A."/>
            <person name="Sterky F."/>
            <person name="Terry A."/>
            <person name="Tsai C.-J."/>
            <person name="Uberbacher E."/>
            <person name="Unneberg P."/>
            <person name="Vahala J."/>
            <person name="Wall K."/>
            <person name="Wessler S."/>
            <person name="Yang G."/>
            <person name="Yin T."/>
            <person name="Douglas C."/>
            <person name="Marra M."/>
            <person name="Sandberg G."/>
            <person name="Van de Peer Y."/>
            <person name="Rokhsar D.S."/>
        </authorList>
    </citation>
    <scope>NUCLEOTIDE SEQUENCE [LARGE SCALE GENOMIC DNA]</scope>
    <source>
        <strain>cv. Nisqually</strain>
    </source>
</reference>
<reference key="2">
    <citation type="submission" date="2008-12" db="EMBL/GenBank/DDBJ databases">
        <authorList>
            <consortium name="US DOE Joint Genome Institute (JGI-PGF)"/>
            <person name="Grigoriev I.V."/>
            <person name="Terry A."/>
            <person name="Salamov A.A."/>
            <person name="Otillar R."/>
            <person name="Lou Y."/>
            <person name="Lucas S."/>
            <person name="Hammon N."/>
            <person name="Glavina del Rio T."/>
            <person name="Detter J."/>
            <person name="Kalin E."/>
            <person name="Tice H."/>
            <person name="Pitluck S."/>
            <person name="Chapman J."/>
            <person name="Putnam N.H."/>
            <person name="Brunner A."/>
            <person name="Busov V."/>
            <person name="Campbell M."/>
            <person name="Chalot M."/>
            <person name="Covert S."/>
            <person name="Davis J."/>
            <person name="DiFazio S."/>
            <person name="Gribskov M."/>
            <person name="Gunter L."/>
            <person name="Hamberger B."/>
            <person name="Jansson S."/>
            <person name="Joshi C."/>
            <person name="Larimer F."/>
            <person name="Martin F."/>
            <person name="Napoli C."/>
            <person name="Nelson D."/>
            <person name="Ralph S."/>
            <person name="Rombauts S."/>
            <person name="Rouze P."/>
            <person name="Schrader J."/>
            <person name="Tsai C."/>
            <person name="Vahala J."/>
            <person name="Tuskan G."/>
            <person name="Rokhsar D."/>
        </authorList>
    </citation>
    <scope>GENOME REANNOTATION</scope>
    <source>
        <strain>cv. Nisqually</strain>
    </source>
</reference>
<reference key="3">
    <citation type="journal article" date="2014" name="Plant Physiol.">
        <title>Functional and evolutionary analysis of the CASPARIAN STRIP MEMBRANE DOMAIN PROTEIN family.</title>
        <authorList>
            <person name="Roppolo D."/>
            <person name="Boeckmann B."/>
            <person name="Pfister A."/>
            <person name="Boutet E."/>
            <person name="Rubio M.C."/>
            <person name="Denervaud-Tendon V."/>
            <person name="Vermeer J.E."/>
            <person name="Gheyselinck J."/>
            <person name="Xenarios I."/>
            <person name="Geldner N."/>
        </authorList>
    </citation>
    <scope>GENE FAMILY</scope>
    <scope>NOMENCLATURE</scope>
</reference>
<accession>B9I534</accession>
<feature type="chain" id="PRO_0000376091" description="Casparian strip membrane protein 6">
    <location>
        <begin position="1"/>
        <end position="186"/>
    </location>
</feature>
<feature type="topological domain" description="Cytoplasmic" evidence="2">
    <location>
        <begin position="1"/>
        <end position="23"/>
    </location>
</feature>
<feature type="transmembrane region" description="Helical" evidence="2">
    <location>
        <begin position="24"/>
        <end position="44"/>
    </location>
</feature>
<feature type="topological domain" description="Extracellular" evidence="2">
    <location>
        <begin position="45"/>
        <end position="73"/>
    </location>
</feature>
<feature type="transmembrane region" description="Helical" evidence="2">
    <location>
        <begin position="74"/>
        <end position="94"/>
    </location>
</feature>
<feature type="topological domain" description="Cytoplasmic" evidence="2">
    <location>
        <begin position="95"/>
        <end position="106"/>
    </location>
</feature>
<feature type="transmembrane region" description="Helical" evidence="2">
    <location>
        <begin position="107"/>
        <end position="127"/>
    </location>
</feature>
<feature type="topological domain" description="Extracellular" evidence="2">
    <location>
        <begin position="128"/>
        <end position="160"/>
    </location>
</feature>
<feature type="transmembrane region" description="Helical" evidence="2">
    <location>
        <begin position="161"/>
        <end position="181"/>
    </location>
</feature>
<feature type="topological domain" description="Cytoplasmic" evidence="2">
    <location>
        <begin position="182"/>
        <end position="186"/>
    </location>
</feature>
<feature type="glycosylation site" description="N-linked (GlcNAc...) asparagine" evidence="2">
    <location>
        <position position="50"/>
    </location>
</feature>
<feature type="glycosylation site" description="N-linked (GlcNAc...) asparagine" evidence="2">
    <location>
        <position position="142"/>
    </location>
</feature>
<organism>
    <name type="scientific">Populus trichocarpa</name>
    <name type="common">Western balsam poplar</name>
    <name type="synonym">Populus balsamifera subsp. trichocarpa</name>
    <dbReference type="NCBI Taxonomy" id="3694"/>
    <lineage>
        <taxon>Eukaryota</taxon>
        <taxon>Viridiplantae</taxon>
        <taxon>Streptophyta</taxon>
        <taxon>Embryophyta</taxon>
        <taxon>Tracheophyta</taxon>
        <taxon>Spermatophyta</taxon>
        <taxon>Magnoliopsida</taxon>
        <taxon>eudicotyledons</taxon>
        <taxon>Gunneridae</taxon>
        <taxon>Pentapetalae</taxon>
        <taxon>rosids</taxon>
        <taxon>fabids</taxon>
        <taxon>Malpighiales</taxon>
        <taxon>Salicaceae</taxon>
        <taxon>Saliceae</taxon>
        <taxon>Populus</taxon>
    </lineage>
</organism>
<protein>
    <recommendedName>
        <fullName>Casparian strip membrane protein 6</fullName>
        <shortName>PtCASP6</shortName>
    </recommendedName>
</protein>
<evidence type="ECO:0000250" key="1"/>
<evidence type="ECO:0000255" key="2"/>
<evidence type="ECO:0000305" key="3"/>
<dbReference type="EMBL" id="CM009301">
    <property type="protein sequence ID" value="EEE96589.1"/>
    <property type="molecule type" value="Genomic_DNA"/>
</dbReference>
<dbReference type="RefSeq" id="XP_002318369.1">
    <property type="nucleotide sequence ID" value="XM_002318333.2"/>
</dbReference>
<dbReference type="SMR" id="B9I534"/>
<dbReference type="FunCoup" id="B9I534">
    <property type="interactions" value="4"/>
</dbReference>
<dbReference type="STRING" id="3694.B9I534"/>
<dbReference type="EnsemblPlants" id="Potri.012G032300.1.v4.1">
    <property type="protein sequence ID" value="Potri.012G032300.1.v4.1"/>
    <property type="gene ID" value="Potri.012G032300.v4.1"/>
</dbReference>
<dbReference type="Gramene" id="Potri.012G032300.1.v4.1">
    <property type="protein sequence ID" value="Potri.012G032300.1.v4.1"/>
    <property type="gene ID" value="Potri.012G032300.v4.1"/>
</dbReference>
<dbReference type="KEGG" id="pop:7489808"/>
<dbReference type="eggNOG" id="ENOG502RXTK">
    <property type="taxonomic scope" value="Eukaryota"/>
</dbReference>
<dbReference type="HOGENOM" id="CLU_066104_3_2_1"/>
<dbReference type="InParanoid" id="B9I534"/>
<dbReference type="OMA" id="VNWFAIC"/>
<dbReference type="OrthoDB" id="753675at2759"/>
<dbReference type="Proteomes" id="UP000006729">
    <property type="component" value="Chromosome 12"/>
</dbReference>
<dbReference type="ExpressionAtlas" id="B9I534">
    <property type="expression patterns" value="baseline"/>
</dbReference>
<dbReference type="GO" id="GO:0048226">
    <property type="term" value="C:Casparian strip"/>
    <property type="evidence" value="ECO:0007669"/>
    <property type="project" value="EnsemblPlants"/>
</dbReference>
<dbReference type="GO" id="GO:0005886">
    <property type="term" value="C:plasma membrane"/>
    <property type="evidence" value="ECO:0000318"/>
    <property type="project" value="GO_Central"/>
</dbReference>
<dbReference type="GO" id="GO:0042545">
    <property type="term" value="P:cell wall modification"/>
    <property type="evidence" value="ECO:0000318"/>
    <property type="project" value="GO_Central"/>
</dbReference>
<dbReference type="GO" id="GO:0007043">
    <property type="term" value="P:cell-cell junction assembly"/>
    <property type="evidence" value="ECO:0000318"/>
    <property type="project" value="GO_Central"/>
</dbReference>
<dbReference type="InterPro" id="IPR006459">
    <property type="entry name" value="CASP/CASPL"/>
</dbReference>
<dbReference type="InterPro" id="IPR006702">
    <property type="entry name" value="CASP_dom"/>
</dbReference>
<dbReference type="InterPro" id="IPR044173">
    <property type="entry name" value="CASPL"/>
</dbReference>
<dbReference type="NCBIfam" id="TIGR01569">
    <property type="entry name" value="A_tha_TIGR01569"/>
    <property type="match status" value="1"/>
</dbReference>
<dbReference type="PANTHER" id="PTHR36488:SF12">
    <property type="entry name" value="CASP-LIKE PROTEIN"/>
    <property type="match status" value="1"/>
</dbReference>
<dbReference type="PANTHER" id="PTHR36488">
    <property type="entry name" value="CASP-LIKE PROTEIN 1U1"/>
    <property type="match status" value="1"/>
</dbReference>
<dbReference type="Pfam" id="PF04535">
    <property type="entry name" value="CASP_dom"/>
    <property type="match status" value="1"/>
</dbReference>
<sequence>MKAGPIELGEGKSSAPKAAVNRGVAILDFILRILAFIGTLGSAISMATTNETLPFFTQFIRFRAEYDDLPTFTFFVVANGVVSAYLLFSLPFSIFNIVRSKAQNSRILLIILDTAMLGLLSAGASAAAAIVYLAHQGNVRTNWSAICQQFNSFCERISGSLIGSFIGVVVFILLISLSAVALSRHK</sequence>
<name>CASP6_POPTR</name>